<feature type="chain" id="PRO_0000338763" description="Translation initiation factor IF-1 2">
    <location>
        <begin position="1"/>
        <end position="72"/>
    </location>
</feature>
<feature type="domain" description="S1-like" evidence="1">
    <location>
        <begin position="1"/>
        <end position="72"/>
    </location>
</feature>
<dbReference type="EMBL" id="AM406670">
    <property type="protein sequence ID" value="CAL96012.1"/>
    <property type="molecule type" value="Genomic_DNA"/>
</dbReference>
<dbReference type="RefSeq" id="WP_011767119.1">
    <property type="nucleotide sequence ID" value="NC_008702.1"/>
</dbReference>
<dbReference type="SMR" id="A1KB06"/>
<dbReference type="STRING" id="62928.azo3396"/>
<dbReference type="KEGG" id="aoa:dqs_3535"/>
<dbReference type="KEGG" id="azo:azo3396"/>
<dbReference type="eggNOG" id="COG0361">
    <property type="taxonomic scope" value="Bacteria"/>
</dbReference>
<dbReference type="HOGENOM" id="CLU_151267_1_0_4"/>
<dbReference type="OrthoDB" id="9803250at2"/>
<dbReference type="Proteomes" id="UP000002588">
    <property type="component" value="Chromosome"/>
</dbReference>
<dbReference type="GO" id="GO:0005829">
    <property type="term" value="C:cytosol"/>
    <property type="evidence" value="ECO:0007669"/>
    <property type="project" value="TreeGrafter"/>
</dbReference>
<dbReference type="GO" id="GO:0043022">
    <property type="term" value="F:ribosome binding"/>
    <property type="evidence" value="ECO:0007669"/>
    <property type="project" value="UniProtKB-UniRule"/>
</dbReference>
<dbReference type="GO" id="GO:0019843">
    <property type="term" value="F:rRNA binding"/>
    <property type="evidence" value="ECO:0007669"/>
    <property type="project" value="UniProtKB-UniRule"/>
</dbReference>
<dbReference type="GO" id="GO:0003743">
    <property type="term" value="F:translation initiation factor activity"/>
    <property type="evidence" value="ECO:0007669"/>
    <property type="project" value="UniProtKB-UniRule"/>
</dbReference>
<dbReference type="CDD" id="cd04451">
    <property type="entry name" value="S1_IF1"/>
    <property type="match status" value="1"/>
</dbReference>
<dbReference type="FunFam" id="2.40.50.140:FF:000002">
    <property type="entry name" value="Translation initiation factor IF-1"/>
    <property type="match status" value="1"/>
</dbReference>
<dbReference type="Gene3D" id="2.40.50.140">
    <property type="entry name" value="Nucleic acid-binding proteins"/>
    <property type="match status" value="1"/>
</dbReference>
<dbReference type="HAMAP" id="MF_00075">
    <property type="entry name" value="IF_1"/>
    <property type="match status" value="1"/>
</dbReference>
<dbReference type="InterPro" id="IPR012340">
    <property type="entry name" value="NA-bd_OB-fold"/>
</dbReference>
<dbReference type="InterPro" id="IPR006196">
    <property type="entry name" value="RNA-binding_domain_S1_IF1"/>
</dbReference>
<dbReference type="InterPro" id="IPR003029">
    <property type="entry name" value="S1_domain"/>
</dbReference>
<dbReference type="InterPro" id="IPR004368">
    <property type="entry name" value="TIF_IF1"/>
</dbReference>
<dbReference type="NCBIfam" id="TIGR00008">
    <property type="entry name" value="infA"/>
    <property type="match status" value="1"/>
</dbReference>
<dbReference type="PANTHER" id="PTHR33370">
    <property type="entry name" value="TRANSLATION INITIATION FACTOR IF-1, CHLOROPLASTIC"/>
    <property type="match status" value="1"/>
</dbReference>
<dbReference type="PANTHER" id="PTHR33370:SF1">
    <property type="entry name" value="TRANSLATION INITIATION FACTOR IF-1, CHLOROPLASTIC"/>
    <property type="match status" value="1"/>
</dbReference>
<dbReference type="Pfam" id="PF01176">
    <property type="entry name" value="eIF-1a"/>
    <property type="match status" value="1"/>
</dbReference>
<dbReference type="SMART" id="SM00316">
    <property type="entry name" value="S1"/>
    <property type="match status" value="1"/>
</dbReference>
<dbReference type="SUPFAM" id="SSF50249">
    <property type="entry name" value="Nucleic acid-binding proteins"/>
    <property type="match status" value="1"/>
</dbReference>
<dbReference type="PROSITE" id="PS50832">
    <property type="entry name" value="S1_IF1_TYPE"/>
    <property type="match status" value="1"/>
</dbReference>
<reference key="1">
    <citation type="journal article" date="2006" name="Nat. Biotechnol.">
        <title>Complete genome of the mutualistic, N2-fixing grass endophyte Azoarcus sp. strain BH72.</title>
        <authorList>
            <person name="Krause A."/>
            <person name="Ramakumar A."/>
            <person name="Bartels D."/>
            <person name="Battistoni F."/>
            <person name="Bekel T."/>
            <person name="Boch J."/>
            <person name="Boehm M."/>
            <person name="Friedrich F."/>
            <person name="Hurek T."/>
            <person name="Krause L."/>
            <person name="Linke B."/>
            <person name="McHardy A.C."/>
            <person name="Sarkar A."/>
            <person name="Schneiker S."/>
            <person name="Syed A.A."/>
            <person name="Thauer R."/>
            <person name="Vorhoelter F.-J."/>
            <person name="Weidner S."/>
            <person name="Puehler A."/>
            <person name="Reinhold-Hurek B."/>
            <person name="Kaiser O."/>
            <person name="Goesmann A."/>
        </authorList>
    </citation>
    <scope>NUCLEOTIDE SEQUENCE [LARGE SCALE GENOMIC DNA]</scope>
    <source>
        <strain>BH72</strain>
    </source>
</reference>
<accession>A1KB06</accession>
<evidence type="ECO:0000255" key="1">
    <source>
        <dbReference type="HAMAP-Rule" id="MF_00075"/>
    </source>
</evidence>
<gene>
    <name evidence="1" type="primary">infA2</name>
    <name type="ordered locus">azo3396</name>
</gene>
<sequence length="72" mass="8254">MAKEDVIEMQGEVTENLPNATFRVKLENGHMVLGHISGKMRMHYIRILPGDKVTVQLTPYDLTKGRIVFRTK</sequence>
<keyword id="KW-0963">Cytoplasm</keyword>
<keyword id="KW-0396">Initiation factor</keyword>
<keyword id="KW-0648">Protein biosynthesis</keyword>
<keyword id="KW-1185">Reference proteome</keyword>
<keyword id="KW-0694">RNA-binding</keyword>
<keyword id="KW-0699">rRNA-binding</keyword>
<organism>
    <name type="scientific">Azoarcus sp. (strain BH72)</name>
    <dbReference type="NCBI Taxonomy" id="418699"/>
    <lineage>
        <taxon>Bacteria</taxon>
        <taxon>Pseudomonadati</taxon>
        <taxon>Pseudomonadota</taxon>
        <taxon>Betaproteobacteria</taxon>
        <taxon>Rhodocyclales</taxon>
        <taxon>Zoogloeaceae</taxon>
        <taxon>Azoarcus</taxon>
    </lineage>
</organism>
<proteinExistence type="inferred from homology"/>
<name>IF12_AZOSB</name>
<comment type="function">
    <text evidence="1">One of the essential components for the initiation of protein synthesis. Stabilizes the binding of IF-2 and IF-3 on the 30S subunit to which N-formylmethionyl-tRNA(fMet) subsequently binds. Helps modulate mRNA selection, yielding the 30S pre-initiation complex (PIC). Upon addition of the 50S ribosomal subunit IF-1, IF-2 and IF-3 are released leaving the mature 70S translation initiation complex.</text>
</comment>
<comment type="subunit">
    <text evidence="1">Component of the 30S ribosomal translation pre-initiation complex which assembles on the 30S ribosome in the order IF-2 and IF-3, IF-1 and N-formylmethionyl-tRNA(fMet); mRNA recruitment can occur at any time during PIC assembly.</text>
</comment>
<comment type="subcellular location">
    <subcellularLocation>
        <location evidence="1">Cytoplasm</location>
    </subcellularLocation>
</comment>
<comment type="similarity">
    <text evidence="1">Belongs to the IF-1 family.</text>
</comment>
<protein>
    <recommendedName>
        <fullName evidence="1">Translation initiation factor IF-1 2</fullName>
    </recommendedName>
</protein>